<protein>
    <recommendedName>
        <fullName evidence="1">Bifunctional protein FolD</fullName>
    </recommendedName>
    <domain>
        <recommendedName>
            <fullName evidence="1">Methylenetetrahydrofolate dehydrogenase</fullName>
            <ecNumber evidence="1">1.5.1.5</ecNumber>
        </recommendedName>
    </domain>
    <domain>
        <recommendedName>
            <fullName evidence="1">Methenyltetrahydrofolate cyclohydrolase</fullName>
            <ecNumber evidence="1">3.5.4.9</ecNumber>
        </recommendedName>
    </domain>
</protein>
<proteinExistence type="inferred from homology"/>
<name>FOLD_BARQU</name>
<dbReference type="EC" id="1.5.1.5" evidence="1"/>
<dbReference type="EC" id="3.5.4.9" evidence="1"/>
<dbReference type="EMBL" id="BX897700">
    <property type="protein sequence ID" value="CAF25796.1"/>
    <property type="molecule type" value="Genomic_DNA"/>
</dbReference>
<dbReference type="RefSeq" id="WP_011179094.1">
    <property type="nucleotide sequence ID" value="NC_005955.1"/>
</dbReference>
<dbReference type="SMR" id="Q6G0I9"/>
<dbReference type="KEGG" id="bqu:BQ02960"/>
<dbReference type="eggNOG" id="COG0190">
    <property type="taxonomic scope" value="Bacteria"/>
</dbReference>
<dbReference type="HOGENOM" id="CLU_034045_1_2_5"/>
<dbReference type="OrthoDB" id="9803580at2"/>
<dbReference type="UniPathway" id="UPA00193"/>
<dbReference type="Proteomes" id="UP000000597">
    <property type="component" value="Chromosome"/>
</dbReference>
<dbReference type="GO" id="GO:0005829">
    <property type="term" value="C:cytosol"/>
    <property type="evidence" value="ECO:0007669"/>
    <property type="project" value="TreeGrafter"/>
</dbReference>
<dbReference type="GO" id="GO:0004477">
    <property type="term" value="F:methenyltetrahydrofolate cyclohydrolase activity"/>
    <property type="evidence" value="ECO:0007669"/>
    <property type="project" value="UniProtKB-UniRule"/>
</dbReference>
<dbReference type="GO" id="GO:0004488">
    <property type="term" value="F:methylenetetrahydrofolate dehydrogenase (NADP+) activity"/>
    <property type="evidence" value="ECO:0007669"/>
    <property type="project" value="UniProtKB-UniRule"/>
</dbReference>
<dbReference type="GO" id="GO:0000105">
    <property type="term" value="P:L-histidine biosynthetic process"/>
    <property type="evidence" value="ECO:0007669"/>
    <property type="project" value="UniProtKB-KW"/>
</dbReference>
<dbReference type="GO" id="GO:0009086">
    <property type="term" value="P:methionine biosynthetic process"/>
    <property type="evidence" value="ECO:0007669"/>
    <property type="project" value="UniProtKB-KW"/>
</dbReference>
<dbReference type="GO" id="GO:0006164">
    <property type="term" value="P:purine nucleotide biosynthetic process"/>
    <property type="evidence" value="ECO:0007669"/>
    <property type="project" value="UniProtKB-KW"/>
</dbReference>
<dbReference type="GO" id="GO:0035999">
    <property type="term" value="P:tetrahydrofolate interconversion"/>
    <property type="evidence" value="ECO:0007669"/>
    <property type="project" value="UniProtKB-UniRule"/>
</dbReference>
<dbReference type="CDD" id="cd01080">
    <property type="entry name" value="NAD_bind_m-THF_DH_Cyclohyd"/>
    <property type="match status" value="1"/>
</dbReference>
<dbReference type="FunFam" id="3.40.50.720:FF:000006">
    <property type="entry name" value="Bifunctional protein FolD"/>
    <property type="match status" value="1"/>
</dbReference>
<dbReference type="FunFam" id="3.40.50.10860:FF:000005">
    <property type="entry name" value="C-1-tetrahydrofolate synthase, cytoplasmic, putative"/>
    <property type="match status" value="1"/>
</dbReference>
<dbReference type="Gene3D" id="3.40.50.10860">
    <property type="entry name" value="Leucine Dehydrogenase, chain A, domain 1"/>
    <property type="match status" value="1"/>
</dbReference>
<dbReference type="Gene3D" id="3.40.50.720">
    <property type="entry name" value="NAD(P)-binding Rossmann-like Domain"/>
    <property type="match status" value="1"/>
</dbReference>
<dbReference type="HAMAP" id="MF_01576">
    <property type="entry name" value="THF_DHG_CYH"/>
    <property type="match status" value="1"/>
</dbReference>
<dbReference type="InterPro" id="IPR046346">
    <property type="entry name" value="Aminoacid_DH-like_N_sf"/>
</dbReference>
<dbReference type="InterPro" id="IPR036291">
    <property type="entry name" value="NAD(P)-bd_dom_sf"/>
</dbReference>
<dbReference type="InterPro" id="IPR000672">
    <property type="entry name" value="THF_DH/CycHdrlase"/>
</dbReference>
<dbReference type="InterPro" id="IPR020630">
    <property type="entry name" value="THF_DH/CycHdrlase_cat_dom"/>
</dbReference>
<dbReference type="InterPro" id="IPR020867">
    <property type="entry name" value="THF_DH/CycHdrlase_CS"/>
</dbReference>
<dbReference type="InterPro" id="IPR020631">
    <property type="entry name" value="THF_DH/CycHdrlase_NAD-bd_dom"/>
</dbReference>
<dbReference type="NCBIfam" id="NF010783">
    <property type="entry name" value="PRK14186.1"/>
    <property type="match status" value="1"/>
</dbReference>
<dbReference type="NCBIfam" id="NF010785">
    <property type="entry name" value="PRK14188.1"/>
    <property type="match status" value="1"/>
</dbReference>
<dbReference type="PANTHER" id="PTHR48099:SF5">
    <property type="entry name" value="C-1-TETRAHYDROFOLATE SYNTHASE, CYTOPLASMIC"/>
    <property type="match status" value="1"/>
</dbReference>
<dbReference type="PANTHER" id="PTHR48099">
    <property type="entry name" value="C-1-TETRAHYDROFOLATE SYNTHASE, CYTOPLASMIC-RELATED"/>
    <property type="match status" value="1"/>
</dbReference>
<dbReference type="Pfam" id="PF00763">
    <property type="entry name" value="THF_DHG_CYH"/>
    <property type="match status" value="1"/>
</dbReference>
<dbReference type="Pfam" id="PF02882">
    <property type="entry name" value="THF_DHG_CYH_C"/>
    <property type="match status" value="1"/>
</dbReference>
<dbReference type="PRINTS" id="PR00085">
    <property type="entry name" value="THFDHDRGNASE"/>
</dbReference>
<dbReference type="SUPFAM" id="SSF53223">
    <property type="entry name" value="Aminoacid dehydrogenase-like, N-terminal domain"/>
    <property type="match status" value="1"/>
</dbReference>
<dbReference type="SUPFAM" id="SSF51735">
    <property type="entry name" value="NAD(P)-binding Rossmann-fold domains"/>
    <property type="match status" value="1"/>
</dbReference>
<dbReference type="PROSITE" id="PS00766">
    <property type="entry name" value="THF_DHG_CYH_1"/>
    <property type="match status" value="1"/>
</dbReference>
<dbReference type="PROSITE" id="PS00767">
    <property type="entry name" value="THF_DHG_CYH_2"/>
    <property type="match status" value="1"/>
</dbReference>
<feature type="chain" id="PRO_0000268277" description="Bifunctional protein FolD">
    <location>
        <begin position="1"/>
        <end position="299"/>
    </location>
</feature>
<feature type="binding site" evidence="1">
    <location>
        <begin position="168"/>
        <end position="170"/>
    </location>
    <ligand>
        <name>NADP(+)</name>
        <dbReference type="ChEBI" id="CHEBI:58349"/>
    </ligand>
</feature>
<feature type="binding site" evidence="1">
    <location>
        <position position="193"/>
    </location>
    <ligand>
        <name>NADP(+)</name>
        <dbReference type="ChEBI" id="CHEBI:58349"/>
    </ligand>
</feature>
<feature type="binding site" evidence="1">
    <location>
        <position position="234"/>
    </location>
    <ligand>
        <name>NADP(+)</name>
        <dbReference type="ChEBI" id="CHEBI:58349"/>
    </ligand>
</feature>
<sequence length="299" mass="31986">MNNIIDGKKLAEEIIVKVKAETIKLRNNYKIQPGIAVIIVGDDPASHVYVTSKSKKAEECGFFSIKHMLSKETSEKELLQLIATLNSDPKIHGILVQLPLPAHINTNCVTQAIAFQKDVDGFHYINIGKLSCNTLEDAIIPCTPAGAMIMIEQQCGRDLSGLDAVVVGRSNIVGKPMAALLTAANATVTIAHSRTRDLDDVCRSADILVAAVGRPQIIKKDWVKNGAIVIDVGINRIAAPEKGIGKTRLVGDVDFEAIKGKTAAITPVPGGVGPMTIAMLMVNTLNAAARLYNLPVLKL</sequence>
<accession>Q6G0I9</accession>
<comment type="function">
    <text evidence="1">Catalyzes the oxidation of 5,10-methylenetetrahydrofolate to 5,10-methenyltetrahydrofolate and then the hydrolysis of 5,10-methenyltetrahydrofolate to 10-formyltetrahydrofolate.</text>
</comment>
<comment type="catalytic activity">
    <reaction evidence="1">
        <text>(6R)-5,10-methylene-5,6,7,8-tetrahydrofolate + NADP(+) = (6R)-5,10-methenyltetrahydrofolate + NADPH</text>
        <dbReference type="Rhea" id="RHEA:22812"/>
        <dbReference type="ChEBI" id="CHEBI:15636"/>
        <dbReference type="ChEBI" id="CHEBI:57455"/>
        <dbReference type="ChEBI" id="CHEBI:57783"/>
        <dbReference type="ChEBI" id="CHEBI:58349"/>
        <dbReference type="EC" id="1.5.1.5"/>
    </reaction>
</comment>
<comment type="catalytic activity">
    <reaction evidence="1">
        <text>(6R)-5,10-methenyltetrahydrofolate + H2O = (6R)-10-formyltetrahydrofolate + H(+)</text>
        <dbReference type="Rhea" id="RHEA:23700"/>
        <dbReference type="ChEBI" id="CHEBI:15377"/>
        <dbReference type="ChEBI" id="CHEBI:15378"/>
        <dbReference type="ChEBI" id="CHEBI:57455"/>
        <dbReference type="ChEBI" id="CHEBI:195366"/>
        <dbReference type="EC" id="3.5.4.9"/>
    </reaction>
</comment>
<comment type="pathway">
    <text evidence="1">One-carbon metabolism; tetrahydrofolate interconversion.</text>
</comment>
<comment type="subunit">
    <text evidence="1">Homodimer.</text>
</comment>
<comment type="similarity">
    <text evidence="1">Belongs to the tetrahydrofolate dehydrogenase/cyclohydrolase family.</text>
</comment>
<evidence type="ECO:0000255" key="1">
    <source>
        <dbReference type="HAMAP-Rule" id="MF_01576"/>
    </source>
</evidence>
<gene>
    <name evidence="1" type="primary">folD</name>
    <name type="ordered locus">BQ02960</name>
</gene>
<keyword id="KW-0028">Amino-acid biosynthesis</keyword>
<keyword id="KW-0368">Histidine biosynthesis</keyword>
<keyword id="KW-0378">Hydrolase</keyword>
<keyword id="KW-0486">Methionine biosynthesis</keyword>
<keyword id="KW-0511">Multifunctional enzyme</keyword>
<keyword id="KW-0521">NADP</keyword>
<keyword id="KW-0554">One-carbon metabolism</keyword>
<keyword id="KW-0560">Oxidoreductase</keyword>
<keyword id="KW-0658">Purine biosynthesis</keyword>
<reference key="1">
    <citation type="journal article" date="2004" name="Proc. Natl. Acad. Sci. U.S.A.">
        <title>The louse-borne human pathogen Bartonella quintana is a genomic derivative of the zoonotic agent Bartonella henselae.</title>
        <authorList>
            <person name="Alsmark U.C.M."/>
            <person name="Frank A.C."/>
            <person name="Karlberg E.O."/>
            <person name="Legault B.-A."/>
            <person name="Ardell D.H."/>
            <person name="Canbaeck B."/>
            <person name="Eriksson A.-S."/>
            <person name="Naeslund A.K."/>
            <person name="Handley S.A."/>
            <person name="Huvet M."/>
            <person name="La Scola B."/>
            <person name="Holmberg M."/>
            <person name="Andersson S.G.E."/>
        </authorList>
    </citation>
    <scope>NUCLEOTIDE SEQUENCE [LARGE SCALE GENOMIC DNA]</scope>
    <source>
        <strain>Toulouse</strain>
    </source>
</reference>
<organism>
    <name type="scientific">Bartonella quintana (strain Toulouse)</name>
    <name type="common">Rochalimaea quintana</name>
    <dbReference type="NCBI Taxonomy" id="283165"/>
    <lineage>
        <taxon>Bacteria</taxon>
        <taxon>Pseudomonadati</taxon>
        <taxon>Pseudomonadota</taxon>
        <taxon>Alphaproteobacteria</taxon>
        <taxon>Hyphomicrobiales</taxon>
        <taxon>Bartonellaceae</taxon>
        <taxon>Bartonella</taxon>
    </lineage>
</organism>